<evidence type="ECO:0000250" key="1"/>
<evidence type="ECO:0000255" key="2"/>
<evidence type="ECO:0000255" key="3">
    <source>
        <dbReference type="PROSITE-ProRule" id="PRU00067"/>
    </source>
</evidence>
<evidence type="ECO:0000256" key="4">
    <source>
        <dbReference type="SAM" id="MobiDB-lite"/>
    </source>
</evidence>
<evidence type="ECO:0000305" key="5"/>
<gene>
    <name type="primary">swf-1</name>
    <name type="ORF">NCU04080</name>
</gene>
<protein>
    <recommendedName>
        <fullName>Palmitoyltransferase SWF1</fullName>
        <ecNumber>2.3.1.225</ecNumber>
    </recommendedName>
</protein>
<name>SWF1_NEUCR</name>
<proteinExistence type="inferred from homology"/>
<accession>Q7RWM9</accession>
<sequence>MGTIAIIAAVILGISFMTFVAFFGRLPALRNTPISFLHRLIWIHLPNGILTVDRTLTNGRLTTSLTRLGRHLWYDQHPTILIFFFLLLSVGEYLYLPVAWPHFSFTHKFFGTIAILCPYIFLYLSAYTDPGVINAKTHVREMARYPYDFTLFHPGTSCETCHLLKPARSKHCSICKKCVGRMDHHCIFINNCVGANNQRWFILLLLSTAILTLYGGVLGLVIIRAKIQARFPYWTLMPWWTSTQAWNSGDLDFHRWLLLWSWGLQSGVAMGGVTLLALLTTPLVWGLLGYHLWLVYCGTTTNESMKWQDWQAEMDEGGVYKRRMAADGSREKDLKVEPAWTRWPVEAEQIMVRTEDGKPPRSSHRLPGEGEWEAVWRLKDVENLYDIGFWDNLVDVFLPYFMFKESKGRSPVDEREFGRERGRNRRRSS</sequence>
<organism>
    <name type="scientific">Neurospora crassa (strain ATCC 24698 / 74-OR23-1A / CBS 708.71 / DSM 1257 / FGSC 987)</name>
    <dbReference type="NCBI Taxonomy" id="367110"/>
    <lineage>
        <taxon>Eukaryota</taxon>
        <taxon>Fungi</taxon>
        <taxon>Dikarya</taxon>
        <taxon>Ascomycota</taxon>
        <taxon>Pezizomycotina</taxon>
        <taxon>Sordariomycetes</taxon>
        <taxon>Sordariomycetidae</taxon>
        <taxon>Sordariales</taxon>
        <taxon>Sordariaceae</taxon>
        <taxon>Neurospora</taxon>
    </lineage>
</organism>
<dbReference type="EC" id="2.3.1.225"/>
<dbReference type="EMBL" id="CM002241">
    <property type="protein sequence ID" value="EAA26840.1"/>
    <property type="molecule type" value="Genomic_DNA"/>
</dbReference>
<dbReference type="RefSeq" id="XP_956076.1">
    <property type="nucleotide sequence ID" value="XM_950983.2"/>
</dbReference>
<dbReference type="STRING" id="367110.Q7RWM9"/>
<dbReference type="PaxDb" id="5141-EFNCRP00000003596"/>
<dbReference type="EnsemblFungi" id="EAA26840">
    <property type="protein sequence ID" value="EAA26840"/>
    <property type="gene ID" value="NCU04080"/>
</dbReference>
<dbReference type="GeneID" id="3872223"/>
<dbReference type="KEGG" id="ncr:NCU04080"/>
<dbReference type="VEuPathDB" id="FungiDB:NCU04080"/>
<dbReference type="HOGENOM" id="CLU_042181_2_1_1"/>
<dbReference type="InParanoid" id="Q7RWM9"/>
<dbReference type="OMA" id="HIYLIWA"/>
<dbReference type="OrthoDB" id="9909019at2759"/>
<dbReference type="Proteomes" id="UP000001805">
    <property type="component" value="Chromosome 5, Linkage Group VI"/>
</dbReference>
<dbReference type="GO" id="GO:0005783">
    <property type="term" value="C:endoplasmic reticulum"/>
    <property type="evidence" value="ECO:0000318"/>
    <property type="project" value="GO_Central"/>
</dbReference>
<dbReference type="GO" id="GO:0005789">
    <property type="term" value="C:endoplasmic reticulum membrane"/>
    <property type="evidence" value="ECO:0007669"/>
    <property type="project" value="UniProtKB-SubCell"/>
</dbReference>
<dbReference type="GO" id="GO:0005794">
    <property type="term" value="C:Golgi apparatus"/>
    <property type="evidence" value="ECO:0000318"/>
    <property type="project" value="GO_Central"/>
</dbReference>
<dbReference type="GO" id="GO:0019706">
    <property type="term" value="F:protein-cysteine S-palmitoyltransferase activity"/>
    <property type="evidence" value="ECO:0000318"/>
    <property type="project" value="GO_Central"/>
</dbReference>
<dbReference type="GO" id="GO:0006612">
    <property type="term" value="P:protein targeting to membrane"/>
    <property type="evidence" value="ECO:0000318"/>
    <property type="project" value="GO_Central"/>
</dbReference>
<dbReference type="InterPro" id="IPR001594">
    <property type="entry name" value="Palmitoyltrfase_DHHC"/>
</dbReference>
<dbReference type="InterPro" id="IPR039859">
    <property type="entry name" value="PFA4/ZDH16/20/ERF2-like"/>
</dbReference>
<dbReference type="PANTHER" id="PTHR22883:SF288">
    <property type="entry name" value="PALMITOYLTRANSFERASE SWF1"/>
    <property type="match status" value="1"/>
</dbReference>
<dbReference type="PANTHER" id="PTHR22883">
    <property type="entry name" value="ZINC FINGER DHHC DOMAIN CONTAINING PROTEIN"/>
    <property type="match status" value="1"/>
</dbReference>
<dbReference type="Pfam" id="PF01529">
    <property type="entry name" value="DHHC"/>
    <property type="match status" value="1"/>
</dbReference>
<dbReference type="PROSITE" id="PS50216">
    <property type="entry name" value="DHHC"/>
    <property type="match status" value="1"/>
</dbReference>
<keyword id="KW-0012">Acyltransferase</keyword>
<keyword id="KW-0256">Endoplasmic reticulum</keyword>
<keyword id="KW-0449">Lipoprotein</keyword>
<keyword id="KW-0472">Membrane</keyword>
<keyword id="KW-0564">Palmitate</keyword>
<keyword id="KW-1185">Reference proteome</keyword>
<keyword id="KW-0808">Transferase</keyword>
<keyword id="KW-0812">Transmembrane</keyword>
<keyword id="KW-1133">Transmembrane helix</keyword>
<feature type="chain" id="PRO_0000212991" description="Palmitoyltransferase SWF1">
    <location>
        <begin position="1"/>
        <end position="429"/>
    </location>
</feature>
<feature type="topological domain" description="Lumenal" evidence="2">
    <location>
        <begin position="1"/>
        <end position="3"/>
    </location>
</feature>
<feature type="transmembrane region" description="Helical" evidence="2">
    <location>
        <begin position="4"/>
        <end position="24"/>
    </location>
</feature>
<feature type="topological domain" description="Cytoplasmic" evidence="2">
    <location>
        <begin position="25"/>
        <end position="79"/>
    </location>
</feature>
<feature type="transmembrane region" description="Helical" evidence="2">
    <location>
        <begin position="80"/>
        <end position="100"/>
    </location>
</feature>
<feature type="topological domain" description="Lumenal" evidence="2">
    <location>
        <begin position="101"/>
        <end position="112"/>
    </location>
</feature>
<feature type="transmembrane region" description="Helical" evidence="2">
    <location>
        <begin position="113"/>
        <end position="133"/>
    </location>
</feature>
<feature type="topological domain" description="Cytoplasmic" evidence="2">
    <location>
        <begin position="134"/>
        <end position="201"/>
    </location>
</feature>
<feature type="transmembrane region" description="Helical" evidence="2">
    <location>
        <begin position="202"/>
        <end position="222"/>
    </location>
</feature>
<feature type="topological domain" description="Lumenal" evidence="2">
    <location>
        <begin position="223"/>
        <end position="274"/>
    </location>
</feature>
<feature type="transmembrane region" description="Helical" evidence="2">
    <location>
        <begin position="275"/>
        <end position="295"/>
    </location>
</feature>
<feature type="topological domain" description="Cytoplasmic" evidence="2">
    <location>
        <begin position="296"/>
        <end position="429"/>
    </location>
</feature>
<feature type="domain" description="DHHC" evidence="3">
    <location>
        <begin position="156"/>
        <end position="206"/>
    </location>
</feature>
<feature type="region of interest" description="Disordered" evidence="4">
    <location>
        <begin position="408"/>
        <end position="429"/>
    </location>
</feature>
<feature type="compositionally biased region" description="Basic and acidic residues" evidence="4">
    <location>
        <begin position="408"/>
        <end position="421"/>
    </location>
</feature>
<comment type="function">
    <text evidence="1">Palmitoyltransferase that targets several endosomal SNAREs. Palmitoylates the SNAREs at cysteine residues close to the cytoplasmic end of their transmembrane domain. May have a role in the cellular quality control of transmembrane domain-containing proteins (By similarity).</text>
</comment>
<comment type="catalytic activity">
    <reaction>
        <text>L-cysteinyl-[protein] + hexadecanoyl-CoA = S-hexadecanoyl-L-cysteinyl-[protein] + CoA</text>
        <dbReference type="Rhea" id="RHEA:36683"/>
        <dbReference type="Rhea" id="RHEA-COMP:10131"/>
        <dbReference type="Rhea" id="RHEA-COMP:11032"/>
        <dbReference type="ChEBI" id="CHEBI:29950"/>
        <dbReference type="ChEBI" id="CHEBI:57287"/>
        <dbReference type="ChEBI" id="CHEBI:57379"/>
        <dbReference type="ChEBI" id="CHEBI:74151"/>
        <dbReference type="EC" id="2.3.1.225"/>
    </reaction>
</comment>
<comment type="subcellular location">
    <subcellularLocation>
        <location evidence="1">Endoplasmic reticulum membrane</location>
        <topology evidence="1">Multi-pass membrane protein</topology>
    </subcellularLocation>
</comment>
<comment type="domain">
    <text evidence="1">The DHHC domain is required for palmitoyltransferase activity.</text>
</comment>
<comment type="similarity">
    <text evidence="5">Belongs to the DHHC palmitoyltransferase family. SWF1 subfamily.</text>
</comment>
<reference key="1">
    <citation type="journal article" date="2003" name="Nature">
        <title>The genome sequence of the filamentous fungus Neurospora crassa.</title>
        <authorList>
            <person name="Galagan J.E."/>
            <person name="Calvo S.E."/>
            <person name="Borkovich K.A."/>
            <person name="Selker E.U."/>
            <person name="Read N.D."/>
            <person name="Jaffe D.B."/>
            <person name="FitzHugh W."/>
            <person name="Ma L.-J."/>
            <person name="Smirnov S."/>
            <person name="Purcell S."/>
            <person name="Rehman B."/>
            <person name="Elkins T."/>
            <person name="Engels R."/>
            <person name="Wang S."/>
            <person name="Nielsen C.B."/>
            <person name="Butler J."/>
            <person name="Endrizzi M."/>
            <person name="Qui D."/>
            <person name="Ianakiev P."/>
            <person name="Bell-Pedersen D."/>
            <person name="Nelson M.A."/>
            <person name="Werner-Washburne M."/>
            <person name="Selitrennikoff C.P."/>
            <person name="Kinsey J.A."/>
            <person name="Braun E.L."/>
            <person name="Zelter A."/>
            <person name="Schulte U."/>
            <person name="Kothe G.O."/>
            <person name="Jedd G."/>
            <person name="Mewes H.-W."/>
            <person name="Staben C."/>
            <person name="Marcotte E."/>
            <person name="Greenberg D."/>
            <person name="Roy A."/>
            <person name="Foley K."/>
            <person name="Naylor J."/>
            <person name="Stange-Thomann N."/>
            <person name="Barrett R."/>
            <person name="Gnerre S."/>
            <person name="Kamal M."/>
            <person name="Kamvysselis M."/>
            <person name="Mauceli E.W."/>
            <person name="Bielke C."/>
            <person name="Rudd S."/>
            <person name="Frishman D."/>
            <person name="Krystofova S."/>
            <person name="Rasmussen C."/>
            <person name="Metzenberg R.L."/>
            <person name="Perkins D.D."/>
            <person name="Kroken S."/>
            <person name="Cogoni C."/>
            <person name="Macino G."/>
            <person name="Catcheside D.E.A."/>
            <person name="Li W."/>
            <person name="Pratt R.J."/>
            <person name="Osmani S.A."/>
            <person name="DeSouza C.P.C."/>
            <person name="Glass N.L."/>
            <person name="Orbach M.J."/>
            <person name="Berglund J.A."/>
            <person name="Voelker R."/>
            <person name="Yarden O."/>
            <person name="Plamann M."/>
            <person name="Seiler S."/>
            <person name="Dunlap J.C."/>
            <person name="Radford A."/>
            <person name="Aramayo R."/>
            <person name="Natvig D.O."/>
            <person name="Alex L.A."/>
            <person name="Mannhaupt G."/>
            <person name="Ebbole D.J."/>
            <person name="Freitag M."/>
            <person name="Paulsen I."/>
            <person name="Sachs M.S."/>
            <person name="Lander E.S."/>
            <person name="Nusbaum C."/>
            <person name="Birren B.W."/>
        </authorList>
    </citation>
    <scope>NUCLEOTIDE SEQUENCE [LARGE SCALE GENOMIC DNA]</scope>
    <source>
        <strain>ATCC 24698 / 74-OR23-1A / CBS 708.71 / DSM 1257 / FGSC 987</strain>
    </source>
</reference>